<keyword id="KW-0176">Collagen</keyword>
<keyword id="KW-0193">Cuticle</keyword>
<keyword id="KW-1015">Disulfide bond</keyword>
<keyword id="KW-1185">Reference proteome</keyword>
<keyword id="KW-0677">Repeat</keyword>
<keyword id="KW-0732">Signal</keyword>
<dbReference type="EMBL" id="HE601047">
    <property type="protein sequence ID" value="CAP36504.2"/>
    <property type="molecule type" value="Genomic_DNA"/>
</dbReference>
<dbReference type="SMR" id="A8XV37"/>
<dbReference type="WormBase" id="CBG19217">
    <property type="protein sequence ID" value="CBP43255"/>
    <property type="gene ID" value="WBGene00038475"/>
    <property type="gene designation" value="Cbr-col-145"/>
</dbReference>
<dbReference type="eggNOG" id="KOG3544">
    <property type="taxonomic scope" value="Eukaryota"/>
</dbReference>
<dbReference type="HOGENOM" id="CLU_001074_4_3_1"/>
<dbReference type="InParanoid" id="A8XV37"/>
<dbReference type="OMA" id="MYYTHEA"/>
<dbReference type="Proteomes" id="UP000008549">
    <property type="component" value="Unassembled WGS sequence"/>
</dbReference>
<dbReference type="GO" id="GO:0005581">
    <property type="term" value="C:collagen trimer"/>
    <property type="evidence" value="ECO:0007669"/>
    <property type="project" value="UniProtKB-KW"/>
</dbReference>
<dbReference type="GO" id="GO:0042302">
    <property type="term" value="F:structural constituent of cuticle"/>
    <property type="evidence" value="ECO:0007669"/>
    <property type="project" value="UniProtKB-KW"/>
</dbReference>
<dbReference type="Gene3D" id="1.20.5.320">
    <property type="entry name" value="6-Phosphogluconate Dehydrogenase, domain 3"/>
    <property type="match status" value="1"/>
</dbReference>
<dbReference type="InterPro" id="IPR002486">
    <property type="entry name" value="Col_cuticle_N"/>
</dbReference>
<dbReference type="PANTHER" id="PTHR24637">
    <property type="entry name" value="COLLAGEN"/>
    <property type="match status" value="1"/>
</dbReference>
<dbReference type="PANTHER" id="PTHR24637:SF194">
    <property type="entry name" value="CUTICLE COLLAGEN 10-RELATED"/>
    <property type="match status" value="1"/>
</dbReference>
<dbReference type="Pfam" id="PF01484">
    <property type="entry name" value="Col_cuticle_N"/>
    <property type="match status" value="1"/>
</dbReference>
<dbReference type="SMART" id="SM01088">
    <property type="entry name" value="Col_cuticle_N"/>
    <property type="match status" value="1"/>
</dbReference>
<proteinExistence type="inferred from homology"/>
<reference evidence="4" key="1">
    <citation type="journal article" date="2003" name="PLoS Biol.">
        <title>The genome sequence of Caenorhabditis briggsae: a platform for comparative genomics.</title>
        <authorList>
            <person name="Stein L.D."/>
            <person name="Bao Z."/>
            <person name="Blasiar D."/>
            <person name="Blumenthal T."/>
            <person name="Brent M.R."/>
            <person name="Chen N."/>
            <person name="Chinwalla A."/>
            <person name="Clarke L."/>
            <person name="Clee C."/>
            <person name="Coghlan A."/>
            <person name="Coulson A."/>
            <person name="D'Eustachio P."/>
            <person name="Fitch D.H.A."/>
            <person name="Fulton L.A."/>
            <person name="Fulton R.E."/>
            <person name="Griffiths-Jones S."/>
            <person name="Harris T.W."/>
            <person name="Hillier L.W."/>
            <person name="Kamath R."/>
            <person name="Kuwabara P.E."/>
            <person name="Mardis E.R."/>
            <person name="Marra M.A."/>
            <person name="Miner T.L."/>
            <person name="Minx P."/>
            <person name="Mullikin J.C."/>
            <person name="Plumb R.W."/>
            <person name="Rogers J."/>
            <person name="Schein J.E."/>
            <person name="Sohrmann M."/>
            <person name="Spieth J."/>
            <person name="Stajich J.E."/>
            <person name="Wei C."/>
            <person name="Willey D."/>
            <person name="Wilson R.K."/>
            <person name="Durbin R.M."/>
            <person name="Waterston R.H."/>
        </authorList>
    </citation>
    <scope>NUCLEOTIDE SEQUENCE [LARGE SCALE GENOMIC DNA]</scope>
    <source>
        <strain evidence="4">AF16</strain>
    </source>
</reference>
<accession>A8XV37</accession>
<feature type="signal peptide" evidence="2">
    <location>
        <begin position="1"/>
        <end position="30"/>
    </location>
</feature>
<feature type="chain" id="PRO_0000351211" description="Putative cuticle collagen 145" evidence="2">
    <location>
        <begin position="31"/>
        <end position="561"/>
    </location>
</feature>
<feature type="domain" description="Collagen-like" evidence="2">
    <location>
        <begin position="485"/>
        <end position="543"/>
    </location>
</feature>
<feature type="region of interest" description="Disordered" evidence="3">
    <location>
        <begin position="100"/>
        <end position="134"/>
    </location>
</feature>
<feature type="region of interest" description="Triple-helical region" evidence="2">
    <location>
        <begin position="102"/>
        <end position="127"/>
    </location>
</feature>
<feature type="region of interest" description="Disordered" evidence="3">
    <location>
        <begin position="148"/>
        <end position="271"/>
    </location>
</feature>
<feature type="region of interest" description="Triple-helical region" evidence="2">
    <location>
        <begin position="153"/>
        <end position="276"/>
    </location>
</feature>
<feature type="region of interest" description="Disordered" evidence="3">
    <location>
        <begin position="367"/>
        <end position="398"/>
    </location>
</feature>
<feature type="region of interest" description="Triple-helical region" evidence="2">
    <location>
        <begin position="413"/>
        <end position="544"/>
    </location>
</feature>
<feature type="region of interest" description="Disordered" evidence="3">
    <location>
        <begin position="422"/>
        <end position="540"/>
    </location>
</feature>
<feature type="compositionally biased region" description="Pro residues" evidence="3">
    <location>
        <begin position="100"/>
        <end position="112"/>
    </location>
</feature>
<feature type="compositionally biased region" description="Low complexity" evidence="3">
    <location>
        <begin position="164"/>
        <end position="209"/>
    </location>
</feature>
<feature type="compositionally biased region" description="Low complexity" evidence="3">
    <location>
        <begin position="219"/>
        <end position="265"/>
    </location>
</feature>
<feature type="compositionally biased region" description="Pro residues" evidence="3">
    <location>
        <begin position="367"/>
        <end position="379"/>
    </location>
</feature>
<feature type="compositionally biased region" description="Low complexity" evidence="3">
    <location>
        <begin position="422"/>
        <end position="467"/>
    </location>
</feature>
<feature type="compositionally biased region" description="Low complexity" evidence="3">
    <location>
        <begin position="486"/>
        <end position="532"/>
    </location>
</feature>
<sequence length="561" mass="54598">MEKILVTLSTGAASIAVLAVLFTIPSLYNTINEVHDEVLDGVSVFRVETDSAWTEMMDIQITVTPPTKPRVNPFNSIFRQKRQTFSGLPAWCQCEPTKPTCPPGPPGPPGQPGQPGTPGAPGPKGEDNTSTYAPITCAPVSQDCVKCPQGPAGPEGPAGPAGPAGPDGQPGAPGNAGNPGSDGQPGAPGDDGQPGAPGQDGQPGAPGQDGQRGSGAPGAPGAPGNAGPAGPAGQDGAPGQDGQPGPAGPAGQDGAPGNAGSDGQPGAPGGPGLPGNDAAYCACPHGEDSCDHLYRSCLPRCFGEVLDGVSVFRVETDSAWTEMMDIQVTVTPPTKPRVNPFNSVFRQKRQTFSGLPAWCQCEPTKPTCPPGPPGPPGQPGQPGTPGAPGPKGEDNTATYAPITCAPVSQDCVKCPQGPAGPTGPAGLAGPAGPDGQPGFPGQRGNDGFPGAPGAPGDNGQPGAPGQDGFPGQPGADGQRGSGAPGAPGAPGNAGPAGPAGQDGFPGQDGQPGPAGPAGQDGFPGNAGSDGQPGAPGGPGLPGNDAAYCACPPRSAVFLSRH</sequence>
<gene>
    <name evidence="4" type="primary">col-145</name>
    <name type="ORF">CBG19217</name>
</gene>
<evidence type="ECO:0000250" key="1">
    <source>
        <dbReference type="UniProtKB" id="Q17459"/>
    </source>
</evidence>
<evidence type="ECO:0000255" key="2"/>
<evidence type="ECO:0000256" key="3">
    <source>
        <dbReference type="SAM" id="MobiDB-lite"/>
    </source>
</evidence>
<evidence type="ECO:0000312" key="4">
    <source>
        <dbReference type="EMBL" id="CAP36504.2"/>
    </source>
</evidence>
<protein>
    <recommendedName>
        <fullName evidence="1">Putative cuticle collagen 145</fullName>
    </recommendedName>
</protein>
<comment type="function">
    <text evidence="1">Nematode cuticles are composed largely of collagen-like proteins. The cuticle functions both as an exoskeleton and as a barrier to protect the worm from its environment (By similarity).</text>
</comment>
<comment type="subunit">
    <text evidence="1">Collagen polypeptide chains are complexed within the cuticle by disulfide bonds and other types of covalent cross-links.</text>
</comment>
<comment type="similarity">
    <text evidence="2">Belongs to the cuticular collagen family.</text>
</comment>
<name>CO145_CAEBR</name>
<organism>
    <name type="scientific">Caenorhabditis briggsae</name>
    <dbReference type="NCBI Taxonomy" id="6238"/>
    <lineage>
        <taxon>Eukaryota</taxon>
        <taxon>Metazoa</taxon>
        <taxon>Ecdysozoa</taxon>
        <taxon>Nematoda</taxon>
        <taxon>Chromadorea</taxon>
        <taxon>Rhabditida</taxon>
        <taxon>Rhabditina</taxon>
        <taxon>Rhabditomorpha</taxon>
        <taxon>Rhabditoidea</taxon>
        <taxon>Rhabditidae</taxon>
        <taxon>Peloderinae</taxon>
        <taxon>Caenorhabditis</taxon>
    </lineage>
</organism>